<keyword id="KW-0877">Alternative promoter usage</keyword>
<keyword id="KW-0106">Calcium</keyword>
<keyword id="KW-0130">Cell adhesion</keyword>
<keyword id="KW-1003">Cell membrane</keyword>
<keyword id="KW-0966">Cell projection</keyword>
<keyword id="KW-1015">Disulfide bond</keyword>
<keyword id="KW-0245">EGF-like domain</keyword>
<keyword id="KW-0325">Glycoprotein</keyword>
<keyword id="KW-0357">Heparan sulfate</keyword>
<keyword id="KW-0472">Membrane</keyword>
<keyword id="KW-0479">Metal-binding</keyword>
<keyword id="KW-0654">Proteoglycan</keyword>
<keyword id="KW-1185">Reference proteome</keyword>
<keyword id="KW-0677">Repeat</keyword>
<keyword id="KW-0732">Signal</keyword>
<keyword id="KW-0770">Synapse</keyword>
<keyword id="KW-0812">Transmembrane</keyword>
<keyword id="KW-1133">Transmembrane helix</keyword>
<protein>
    <recommendedName>
        <fullName evidence="18">Neurexin-2</fullName>
    </recommendedName>
    <alternativeName>
        <fullName>Neurexin II-alpha</fullName>
    </alternativeName>
    <alternativeName>
        <fullName evidence="17">Neurexin-2-alpha</fullName>
    </alternativeName>
</protein>
<gene>
    <name evidence="19" type="primary">Nrxn2</name>
</gene>
<comment type="function">
    <text evidence="3">Neuronal cell surface protein that may be involved in cell recognition and cell adhesion. May mediate intracellular signaling.</text>
</comment>
<comment type="subunit">
    <text evidence="3 4 10 11 12 13 14 16">The laminin G-like domain 1 binds to NXPH1. Interacts with PATJ (By similarity). Interacts with CBLN1, CBLN2 and, less avidly, with CBLN4 (PubMed:21410790, PubMed:22220752). Specific isoforms bind neuroligins NLGN1, NLGN2 and NLGN3 (By similarity). Specific isoforms bind to alpha-dystroglycan (By similarity). Interacts (via Laminin G-like 1 domain) with IGSF21 (Ig-like 1 domain) in a trans-interaction manner (PubMed:28864826). Interacts with CLSTN3 (PubMed:24094106, PubMed:24613359, PubMed:32434929).</text>
</comment>
<comment type="subcellular location">
    <subcellularLocation>
        <location evidence="5">Presynaptic cell membrane</location>
        <topology evidence="6">Single-pass type I membrane protein</topology>
    </subcellularLocation>
</comment>
<comment type="alternative products">
    <event type="alternative promoter"/>
    <isoform>
        <id>E9Q7X7-1</id>
        <name>1a</name>
        <sequence type="displayed"/>
    </isoform>
    <isoform>
        <id>E9PUN2-1</id>
        <name>1b</name>
        <sequence type="external"/>
    </isoform>
    <text>A number of isoforms, alpha-type and beta-type are produced by alternative promoter usage. Beta-type isoforms differ from alpha-type isoforms in their N-terminus.</text>
</comment>
<comment type="PTM">
    <text evidence="15">O-glycosylated; contains heparan sulfate. Heparan sulfate attachment is required for synapse development by mediating interactions with neuroligins.</text>
</comment>
<organism>
    <name type="scientific">Mus musculus</name>
    <name type="common">Mouse</name>
    <dbReference type="NCBI Taxonomy" id="10090"/>
    <lineage>
        <taxon>Eukaryota</taxon>
        <taxon>Metazoa</taxon>
        <taxon>Chordata</taxon>
        <taxon>Craniata</taxon>
        <taxon>Vertebrata</taxon>
        <taxon>Euteleostomi</taxon>
        <taxon>Mammalia</taxon>
        <taxon>Eutheria</taxon>
        <taxon>Euarchontoglires</taxon>
        <taxon>Glires</taxon>
        <taxon>Rodentia</taxon>
        <taxon>Myomorpha</taxon>
        <taxon>Muroidea</taxon>
        <taxon>Muridae</taxon>
        <taxon>Murinae</taxon>
        <taxon>Mus</taxon>
        <taxon>Mus</taxon>
    </lineage>
</organism>
<name>NRX2A_MOUSE</name>
<evidence type="ECO:0000250" key="1">
    <source>
        <dbReference type="UniProtKB" id="E9PUN2"/>
    </source>
</evidence>
<evidence type="ECO:0000250" key="2">
    <source>
        <dbReference type="UniProtKB" id="Q28146"/>
    </source>
</evidence>
<evidence type="ECO:0000250" key="3">
    <source>
        <dbReference type="UniProtKB" id="Q63374"/>
    </source>
</evidence>
<evidence type="ECO:0000250" key="4">
    <source>
        <dbReference type="UniProtKB" id="Q63376"/>
    </source>
</evidence>
<evidence type="ECO:0000250" key="5">
    <source>
        <dbReference type="UniProtKB" id="Q9CS84"/>
    </source>
</evidence>
<evidence type="ECO:0000255" key="6"/>
<evidence type="ECO:0000255" key="7">
    <source>
        <dbReference type="PROSITE-ProRule" id="PRU00076"/>
    </source>
</evidence>
<evidence type="ECO:0000255" key="8">
    <source>
        <dbReference type="PROSITE-ProRule" id="PRU00122"/>
    </source>
</evidence>
<evidence type="ECO:0000256" key="9">
    <source>
        <dbReference type="SAM" id="MobiDB-lite"/>
    </source>
</evidence>
<evidence type="ECO:0000269" key="10">
    <source>
    </source>
</evidence>
<evidence type="ECO:0000269" key="11">
    <source>
    </source>
</evidence>
<evidence type="ECO:0000269" key="12">
    <source>
    </source>
</evidence>
<evidence type="ECO:0000269" key="13">
    <source>
    </source>
</evidence>
<evidence type="ECO:0000269" key="14">
    <source>
    </source>
</evidence>
<evidence type="ECO:0000269" key="15">
    <source>
    </source>
</evidence>
<evidence type="ECO:0000269" key="16">
    <source>
    </source>
</evidence>
<evidence type="ECO:0000303" key="17">
    <source>
    </source>
</evidence>
<evidence type="ECO:0000305" key="18"/>
<evidence type="ECO:0000312" key="19">
    <source>
        <dbReference type="MGI" id="MGI:1096362"/>
    </source>
</evidence>
<accession>E9Q7X7</accession>
<feature type="signal peptide" evidence="6">
    <location>
        <begin position="1"/>
        <end position="28"/>
    </location>
</feature>
<feature type="chain" id="PRO_5003244492" description="Neurexin-2" evidence="6">
    <location>
        <begin position="29"/>
        <end position="1710"/>
    </location>
</feature>
<feature type="topological domain" description="Extracellular" evidence="18">
    <location>
        <begin position="29"/>
        <end position="1634"/>
    </location>
</feature>
<feature type="transmembrane region" description="Helical" evidence="6">
    <location>
        <begin position="1635"/>
        <end position="1655"/>
    </location>
</feature>
<feature type="topological domain" description="Cytoplasmic" evidence="18">
    <location>
        <begin position="1656"/>
        <end position="1710"/>
    </location>
</feature>
<feature type="domain" description="Laminin G-like 1" evidence="8">
    <location>
        <begin position="29"/>
        <end position="206"/>
    </location>
</feature>
<feature type="domain" description="EGF-like 1" evidence="7">
    <location>
        <begin position="202"/>
        <end position="242"/>
    </location>
</feature>
<feature type="domain" description="Laminin G-like 2" evidence="8">
    <location>
        <begin position="289"/>
        <end position="486"/>
    </location>
</feature>
<feature type="domain" description="Laminin G-like 3" evidence="8">
    <location>
        <begin position="493"/>
        <end position="686"/>
    </location>
</feature>
<feature type="domain" description="EGF-like 2" evidence="7">
    <location>
        <begin position="690"/>
        <end position="727"/>
    </location>
</feature>
<feature type="domain" description="Laminin G-like 4" evidence="8">
    <location>
        <begin position="732"/>
        <end position="904"/>
    </location>
</feature>
<feature type="domain" description="Laminin G-like 5" evidence="8">
    <location>
        <begin position="918"/>
        <end position="1093"/>
    </location>
</feature>
<feature type="domain" description="EGF-like 3" evidence="7">
    <location>
        <begin position="1096"/>
        <end position="1133"/>
    </location>
</feature>
<feature type="domain" description="Laminin G-like 6" evidence="8">
    <location>
        <begin position="1137"/>
        <end position="1345"/>
    </location>
</feature>
<feature type="region of interest" description="Disordered" evidence="9">
    <location>
        <begin position="1458"/>
        <end position="1508"/>
    </location>
</feature>
<feature type="region of interest" description="Disordered" evidence="9">
    <location>
        <begin position="1587"/>
        <end position="1621"/>
    </location>
</feature>
<feature type="region of interest" description="Disordered" evidence="9">
    <location>
        <begin position="1677"/>
        <end position="1710"/>
    </location>
</feature>
<feature type="binding site" evidence="2">
    <location>
        <position position="335"/>
    </location>
    <ligand>
        <name>Ca(2+)</name>
        <dbReference type="ChEBI" id="CHEBI:29108"/>
        <label>1</label>
    </ligand>
</feature>
<feature type="binding site" evidence="2">
    <location>
        <position position="352"/>
    </location>
    <ligand>
        <name>Ca(2+)</name>
        <dbReference type="ChEBI" id="CHEBI:29108"/>
        <label>1</label>
    </ligand>
</feature>
<feature type="binding site" evidence="2">
    <location>
        <position position="420"/>
    </location>
    <ligand>
        <name>Ca(2+)</name>
        <dbReference type="ChEBI" id="CHEBI:29108"/>
        <label>1</label>
    </ligand>
</feature>
<feature type="binding site" evidence="2">
    <location>
        <position position="779"/>
    </location>
    <ligand>
        <name>Ca(2+)</name>
        <dbReference type="ChEBI" id="CHEBI:29108"/>
        <label>2</label>
    </ligand>
</feature>
<feature type="binding site" evidence="2">
    <location>
        <position position="796"/>
    </location>
    <ligand>
        <name>Ca(2+)</name>
        <dbReference type="ChEBI" id="CHEBI:29108"/>
        <label>2</label>
    </ligand>
</feature>
<feature type="binding site" evidence="2">
    <location>
        <position position="854"/>
    </location>
    <ligand>
        <name>Ca(2+)</name>
        <dbReference type="ChEBI" id="CHEBI:29108"/>
        <label>2</label>
    </ligand>
</feature>
<feature type="binding site" evidence="5">
    <location>
        <position position="1189"/>
    </location>
    <ligand>
        <name>Ca(2+)</name>
        <dbReference type="ChEBI" id="CHEBI:29108"/>
        <label>3</label>
    </ligand>
</feature>
<feature type="binding site" evidence="5">
    <location>
        <position position="1206"/>
    </location>
    <ligand>
        <name>Ca(2+)</name>
        <dbReference type="ChEBI" id="CHEBI:29108"/>
        <label>3</label>
    </ligand>
</feature>
<feature type="binding site" evidence="5">
    <location>
        <position position="1288"/>
    </location>
    <ligand>
        <name>Ca(2+)</name>
        <dbReference type="ChEBI" id="CHEBI:29108"/>
        <label>3</label>
    </ligand>
</feature>
<feature type="binding site" evidence="5">
    <location>
        <position position="1290"/>
    </location>
    <ligand>
        <name>Ca(2+)</name>
        <dbReference type="ChEBI" id="CHEBI:29108"/>
        <label>3</label>
    </ligand>
</feature>
<feature type="glycosylation site" description="N-linked (GlcNAc...) asparagine" evidence="6">
    <location>
        <position position="60"/>
    </location>
</feature>
<feature type="glycosylation site" description="N-linked (GlcNAc...) asparagine" evidence="6">
    <location>
        <position position="338"/>
    </location>
</feature>
<feature type="glycosylation site" description="N-linked (GlcNAc...) asparagine" evidence="6">
    <location>
        <position position="841"/>
    </location>
</feature>
<feature type="glycosylation site" description="O-linked (Xyl...) (heparan sulfate) serine" evidence="1">
    <location>
        <position position="1400"/>
    </location>
</feature>
<feature type="disulfide bond" evidence="7">
    <location>
        <begin position="206"/>
        <end position="219"/>
    </location>
</feature>
<feature type="disulfide bond" evidence="7">
    <location>
        <begin position="213"/>
        <end position="229"/>
    </location>
</feature>
<feature type="disulfide bond" evidence="7">
    <location>
        <begin position="231"/>
        <end position="241"/>
    </location>
</feature>
<feature type="disulfide bond" evidence="8">
    <location>
        <begin position="450"/>
        <end position="486"/>
    </location>
</feature>
<feature type="disulfide bond" evidence="8">
    <location>
        <begin position="657"/>
        <end position="686"/>
    </location>
</feature>
<feature type="disulfide bond" evidence="7">
    <location>
        <begin position="694"/>
        <end position="705"/>
    </location>
</feature>
<feature type="disulfide bond" evidence="7">
    <location>
        <begin position="699"/>
        <end position="714"/>
    </location>
</feature>
<feature type="disulfide bond" evidence="7">
    <location>
        <begin position="716"/>
        <end position="726"/>
    </location>
</feature>
<feature type="disulfide bond" evidence="8">
    <location>
        <begin position="1065"/>
        <end position="1093"/>
    </location>
</feature>
<feature type="disulfide bond" evidence="7">
    <location>
        <begin position="1100"/>
        <end position="1111"/>
    </location>
</feature>
<feature type="disulfide bond" evidence="7">
    <location>
        <begin position="1105"/>
        <end position="1120"/>
    </location>
</feature>
<feature type="disulfide bond" evidence="7">
    <location>
        <begin position="1122"/>
        <end position="1132"/>
    </location>
</feature>
<reference key="1">
    <citation type="journal article" date="2009" name="PLoS Biol.">
        <title>Lineage-specific biology revealed by a finished genome assembly of the mouse.</title>
        <authorList>
            <person name="Church D.M."/>
            <person name="Goodstadt L."/>
            <person name="Hillier L.W."/>
            <person name="Zody M.C."/>
            <person name="Goldstein S."/>
            <person name="She X."/>
            <person name="Bult C.J."/>
            <person name="Agarwala R."/>
            <person name="Cherry J.L."/>
            <person name="DiCuccio M."/>
            <person name="Hlavina W."/>
            <person name="Kapustin Y."/>
            <person name="Meric P."/>
            <person name="Maglott D."/>
            <person name="Birtle Z."/>
            <person name="Marques A.C."/>
            <person name="Graves T."/>
            <person name="Zhou S."/>
            <person name="Teague B."/>
            <person name="Potamousis K."/>
            <person name="Churas C."/>
            <person name="Place M."/>
            <person name="Herschleb J."/>
            <person name="Runnheim R."/>
            <person name="Forrest D."/>
            <person name="Amos-Landgraf J."/>
            <person name="Schwartz D.C."/>
            <person name="Cheng Z."/>
            <person name="Lindblad-Toh K."/>
            <person name="Eichler E.E."/>
            <person name="Ponting C.P."/>
        </authorList>
    </citation>
    <scope>NUCLEOTIDE SEQUENCE [LARGE SCALE GENOMIC DNA]</scope>
    <source>
        <strain>C57BL/6J</strain>
    </source>
</reference>
<reference key="2">
    <citation type="journal article" date="2010" name="Cell">
        <title>A tissue-specific atlas of mouse protein phosphorylation and expression.</title>
        <authorList>
            <person name="Huttlin E.L."/>
            <person name="Jedrychowski M.P."/>
            <person name="Elias J.E."/>
            <person name="Goswami T."/>
            <person name="Rad R."/>
            <person name="Beausoleil S.A."/>
            <person name="Villen J."/>
            <person name="Haas W."/>
            <person name="Sowa M.E."/>
            <person name="Gygi S.P."/>
        </authorList>
    </citation>
    <scope>IDENTIFICATION BY MASS SPECTROMETRY [LARGE SCALE ANALYSIS]</scope>
    <source>
        <tissue>Brain</tissue>
    </source>
</reference>
<reference key="3">
    <citation type="journal article" date="2011" name="Eur. J. Neurosci.">
        <title>Cbln family proteins promote synapse formation by regulating distinct neurexin signaling pathways in various brain regions.</title>
        <authorList>
            <person name="Matsuda K."/>
            <person name="Yuzaki M."/>
        </authorList>
    </citation>
    <scope>INTERACTION WITH CBLN1</scope>
</reference>
<reference key="4">
    <citation type="journal article" date="2012" name="J. Neurochem.">
        <title>The Cbln family of proteins interact with multiple signaling pathways.</title>
        <authorList>
            <person name="Wei P."/>
            <person name="Pattarini R."/>
            <person name="Rong Y."/>
            <person name="Guo H."/>
            <person name="Bansal P.K."/>
            <person name="Kusnoor S.V."/>
            <person name="Deutch A.Y."/>
            <person name="Parris J."/>
            <person name="Morgan J.I."/>
        </authorList>
    </citation>
    <scope>INTERACTION WITH CBLN1; CBLN2 AND CBLN4</scope>
</reference>
<reference key="5">
    <citation type="journal article" date="2013" name="Neuron">
        <title>The specific alpha-neurexin interactor calsyntenin-3 promotes excitatory and inhibitory synapse development.</title>
        <authorList>
            <person name="Pettem K.L."/>
            <person name="Yokomaku D."/>
            <person name="Luo L."/>
            <person name="Linhoff M.W."/>
            <person name="Prasad T."/>
            <person name="Connor S.A."/>
            <person name="Siddiqui T.J."/>
            <person name="Kawabe H."/>
            <person name="Chen F."/>
            <person name="Zhang L."/>
            <person name="Rudenko G."/>
            <person name="Wang Y.T."/>
            <person name="Brose N."/>
            <person name="Craig A.M."/>
        </authorList>
    </citation>
    <scope>INTERACTION WITH CLSTN3</scope>
</reference>
<reference key="6">
    <citation type="journal article" date="2014" name="Cell Rep.">
        <title>Calsyntenins function as synaptogenic adhesion molecules in concert with neurexins.</title>
        <authorList>
            <person name="Um J.W."/>
            <person name="Pramanik G."/>
            <person name="Ko J.S."/>
            <person name="Song M.Y."/>
            <person name="Lee D."/>
            <person name="Kim H."/>
            <person name="Park K.S."/>
            <person name="Suedhof T.C."/>
            <person name="Tabuchi K."/>
            <person name="Ko J."/>
        </authorList>
    </citation>
    <scope>INTERACTION WITH CLSTN3</scope>
</reference>
<reference key="7">
    <citation type="journal article" date="2017" name="Nat. Commun.">
        <title>IgSF21 promotes differentiation of inhibitory synapses via binding to neurexin2alpha.</title>
        <authorList>
            <person name="Tanabe Y."/>
            <person name="Naito Y."/>
            <person name="Vasuta C."/>
            <person name="Lee A.K."/>
            <person name="Soumounou Y."/>
            <person name="Linhoff M.W."/>
            <person name="Takahashi H."/>
        </authorList>
    </citation>
    <scope>FUNCTION</scope>
    <scope>SUBCELLULAR LOCATION</scope>
    <scope>INTERACTION WITH IGSF21</scope>
</reference>
<reference key="8">
    <citation type="journal article" date="2018" name="Cell">
        <title>Heparan Sulfate Organizes Neuronal Synapses through Neurexin Partnerships.</title>
        <authorList>
            <person name="Zhang P."/>
            <person name="Lu H."/>
            <person name="Peixoto R.T."/>
            <person name="Pines M.K."/>
            <person name="Ge Y."/>
            <person name="Oku S."/>
            <person name="Siddiqui T.J."/>
            <person name="Xie Y."/>
            <person name="Wu W."/>
            <person name="Archer-Hartmann S."/>
            <person name="Yoshida K."/>
            <person name="Tanaka K.F."/>
            <person name="Aricescu A.R."/>
            <person name="Azadi P."/>
            <person name="Gordon M.D."/>
            <person name="Sabatini B.L."/>
            <person name="Wong R.O.L."/>
            <person name="Craig A.M."/>
        </authorList>
    </citation>
    <scope>GLYCOSYLATION</scope>
</reference>
<reference key="9">
    <citation type="journal article" date="2020" name="J. Biol. Chem.">
        <title>Calsyntenin-3 interacts with both alpha- and beta-neurexins in the regulation of excitatory synaptic innervation in specific Schaffer collateral pathways.</title>
        <authorList>
            <person name="Kim H."/>
            <person name="Kim D."/>
            <person name="Kim J."/>
            <person name="Lee H.Y."/>
            <person name="Park D."/>
            <person name="Kang H."/>
            <person name="Matsuda K."/>
            <person name="Sterky F.H."/>
            <person name="Yuzaki M."/>
            <person name="Kim J.Y."/>
            <person name="Choi S.Y."/>
            <person name="Ko J."/>
            <person name="Um J.W."/>
        </authorList>
    </citation>
    <scope>INTERACTION WITH CLSTN3</scope>
</reference>
<proteinExistence type="evidence at protein level"/>
<dbReference type="EMBL" id="AC124394">
    <property type="status" value="NOT_ANNOTATED_CDS"/>
    <property type="molecule type" value="Genomic_DNA"/>
</dbReference>
<dbReference type="EMBL" id="AC167245">
    <property type="status" value="NOT_ANNOTATED_CDS"/>
    <property type="molecule type" value="Genomic_DNA"/>
</dbReference>
<dbReference type="CCDS" id="CCDS89327.1">
    <molecule id="E9Q7X7-1"/>
</dbReference>
<dbReference type="RefSeq" id="NP_001356292.1">
    <molecule id="E9Q7X7-1"/>
    <property type="nucleotide sequence ID" value="NM_001369363.1"/>
</dbReference>
<dbReference type="SMR" id="E9Q7X7"/>
<dbReference type="FunCoup" id="E9Q7X7">
    <property type="interactions" value="624"/>
</dbReference>
<dbReference type="STRING" id="10090.ENSMUSP00000109089"/>
<dbReference type="GlyConnect" id="2540">
    <property type="glycosylation" value="2 N-Linked glycans (1 site)"/>
</dbReference>
<dbReference type="GlyCosmos" id="E9Q7X7">
    <property type="glycosylation" value="4 sites, 2 glycans"/>
</dbReference>
<dbReference type="GlyGen" id="E9Q7X7">
    <property type="glycosylation" value="6 sites, 5 N-linked glycans (3 sites), 1 O-linked glycan (1 site)"/>
</dbReference>
<dbReference type="iPTMnet" id="E9Q7X7"/>
<dbReference type="PhosphoSitePlus" id="E9Q7X7"/>
<dbReference type="PaxDb" id="10090-ENSMUSP00000109089"/>
<dbReference type="ProteomicsDB" id="318986"/>
<dbReference type="Antibodypedia" id="63686">
    <property type="antibodies" value="43 antibodies from 7 providers"/>
</dbReference>
<dbReference type="Ensembl" id="ENSMUST00000137166.8">
    <molecule id="E9Q7X7-1"/>
    <property type="protein sequence ID" value="ENSMUSP00000119762.2"/>
    <property type="gene ID" value="ENSMUSG00000033768.18"/>
</dbReference>
<dbReference type="GeneID" id="18190"/>
<dbReference type="AGR" id="MGI:1096362"/>
<dbReference type="MGI" id="MGI:1096362">
    <property type="gene designation" value="Nrxn2"/>
</dbReference>
<dbReference type="VEuPathDB" id="HostDB:ENSMUSG00000033768"/>
<dbReference type="GeneTree" id="ENSGT00940000155978"/>
<dbReference type="HOGENOM" id="CLU_001710_1_0_1"/>
<dbReference type="InParanoid" id="E9Q7X7"/>
<dbReference type="OMA" id="XHAGIGH"/>
<dbReference type="OrthoDB" id="5989513at2759"/>
<dbReference type="PhylomeDB" id="E9Q7X7"/>
<dbReference type="Reactome" id="R-MMU-6794361">
    <property type="pathway name" value="Neurexins and neuroligins"/>
</dbReference>
<dbReference type="CD-CODE" id="CE726F99">
    <property type="entry name" value="Postsynaptic density"/>
</dbReference>
<dbReference type="ChiTaRS" id="Nrxn2">
    <property type="organism name" value="mouse"/>
</dbReference>
<dbReference type="PRO" id="PR:E9Q7X7"/>
<dbReference type="Proteomes" id="UP000000589">
    <property type="component" value="Chromosome 19"/>
</dbReference>
<dbReference type="RNAct" id="E9Q7X7">
    <property type="molecule type" value="protein"/>
</dbReference>
<dbReference type="Bgee" id="ENSMUSG00000033768">
    <property type="expression patterns" value="Expressed in embryonic brain and 69 other cell types or tissues"/>
</dbReference>
<dbReference type="ExpressionAtlas" id="E9Q7X7">
    <property type="expression patterns" value="baseline and differential"/>
</dbReference>
<dbReference type="GO" id="GO:0042995">
    <property type="term" value="C:cell projection"/>
    <property type="evidence" value="ECO:0007669"/>
    <property type="project" value="UniProtKB-KW"/>
</dbReference>
<dbReference type="GO" id="GO:0098978">
    <property type="term" value="C:glutamatergic synapse"/>
    <property type="evidence" value="ECO:0000314"/>
    <property type="project" value="SynGO"/>
</dbReference>
<dbReference type="GO" id="GO:0042734">
    <property type="term" value="C:presynaptic membrane"/>
    <property type="evidence" value="ECO:0000247"/>
    <property type="project" value="MGI"/>
</dbReference>
<dbReference type="GO" id="GO:0032991">
    <property type="term" value="C:protein-containing complex"/>
    <property type="evidence" value="ECO:0000353"/>
    <property type="project" value="MGI"/>
</dbReference>
<dbReference type="GO" id="GO:0005246">
    <property type="term" value="F:calcium channel regulator activity"/>
    <property type="evidence" value="ECO:0000316"/>
    <property type="project" value="MGI"/>
</dbReference>
<dbReference type="GO" id="GO:0050839">
    <property type="term" value="F:cell adhesion molecule binding"/>
    <property type="evidence" value="ECO:0000353"/>
    <property type="project" value="BHF-UCL"/>
</dbReference>
<dbReference type="GO" id="GO:0046872">
    <property type="term" value="F:metal ion binding"/>
    <property type="evidence" value="ECO:0007669"/>
    <property type="project" value="UniProtKB-KW"/>
</dbReference>
<dbReference type="GO" id="GO:0097109">
    <property type="term" value="F:neuroligin family protein binding"/>
    <property type="evidence" value="ECO:0000353"/>
    <property type="project" value="BHF-UCL"/>
</dbReference>
<dbReference type="GO" id="GO:0004888">
    <property type="term" value="F:transmembrane signaling receptor activity"/>
    <property type="evidence" value="ECO:0000314"/>
    <property type="project" value="BHF-UCL"/>
</dbReference>
<dbReference type="GO" id="GO:0030534">
    <property type="term" value="P:adult behavior"/>
    <property type="evidence" value="ECO:0007669"/>
    <property type="project" value="Ensembl"/>
</dbReference>
<dbReference type="GO" id="GO:0007155">
    <property type="term" value="P:cell adhesion"/>
    <property type="evidence" value="ECO:0007669"/>
    <property type="project" value="UniProtKB-KW"/>
</dbReference>
<dbReference type="GO" id="GO:0007268">
    <property type="term" value="P:chemical synaptic transmission"/>
    <property type="evidence" value="ECO:0000316"/>
    <property type="project" value="MGI"/>
</dbReference>
<dbReference type="GO" id="GO:0097116">
    <property type="term" value="P:gephyrin clustering involved in postsynaptic density assembly"/>
    <property type="evidence" value="ECO:0000314"/>
    <property type="project" value="BHF-UCL"/>
</dbReference>
<dbReference type="GO" id="GO:0097118">
    <property type="term" value="P:neuroligin clustering involved in postsynaptic membrane assembly"/>
    <property type="evidence" value="ECO:0000314"/>
    <property type="project" value="BHF-UCL"/>
</dbReference>
<dbReference type="GO" id="GO:0007269">
    <property type="term" value="P:neurotransmitter secretion"/>
    <property type="evidence" value="ECO:0000316"/>
    <property type="project" value="MGI"/>
</dbReference>
<dbReference type="GO" id="GO:0097119">
    <property type="term" value="P:postsynaptic density protein 95 clustering"/>
    <property type="evidence" value="ECO:0000314"/>
    <property type="project" value="BHF-UCL"/>
</dbReference>
<dbReference type="GO" id="GO:0097104">
    <property type="term" value="P:postsynaptic membrane assembly"/>
    <property type="evidence" value="ECO:0000314"/>
    <property type="project" value="BHF-UCL"/>
</dbReference>
<dbReference type="GO" id="GO:0099171">
    <property type="term" value="P:presynaptic modulation of chemical synaptic transmission"/>
    <property type="evidence" value="ECO:0000314"/>
    <property type="project" value="SynGO"/>
</dbReference>
<dbReference type="GO" id="GO:0150052">
    <property type="term" value="P:regulation of postsynapse assembly"/>
    <property type="evidence" value="ECO:0000314"/>
    <property type="project" value="SynGO"/>
</dbReference>
<dbReference type="GO" id="GO:0007165">
    <property type="term" value="P:signal transduction"/>
    <property type="evidence" value="ECO:0000314"/>
    <property type="project" value="BHF-UCL"/>
</dbReference>
<dbReference type="GO" id="GO:0035176">
    <property type="term" value="P:social behavior"/>
    <property type="evidence" value="ECO:0007669"/>
    <property type="project" value="Ensembl"/>
</dbReference>
<dbReference type="GO" id="GO:0007416">
    <property type="term" value="P:synapse assembly"/>
    <property type="evidence" value="ECO:0000316"/>
    <property type="project" value="MGI"/>
</dbReference>
<dbReference type="GO" id="GO:0042297">
    <property type="term" value="P:vocal learning"/>
    <property type="evidence" value="ECO:0007669"/>
    <property type="project" value="Ensembl"/>
</dbReference>
<dbReference type="GO" id="GO:0071625">
    <property type="term" value="P:vocalization behavior"/>
    <property type="evidence" value="ECO:0007669"/>
    <property type="project" value="Ensembl"/>
</dbReference>
<dbReference type="CDD" id="cd00054">
    <property type="entry name" value="EGF_CA"/>
    <property type="match status" value="1"/>
</dbReference>
<dbReference type="CDD" id="cd00110">
    <property type="entry name" value="LamG"/>
    <property type="match status" value="6"/>
</dbReference>
<dbReference type="FunFam" id="2.10.25.10:FF:000015">
    <property type="entry name" value="neurexin-1 isoform X1"/>
    <property type="match status" value="1"/>
</dbReference>
<dbReference type="FunFam" id="2.10.25.10:FF:000029">
    <property type="entry name" value="neurexin-1 isoform X1"/>
    <property type="match status" value="1"/>
</dbReference>
<dbReference type="FunFam" id="2.60.120.200:FF:000001">
    <property type="entry name" value="neurexin-1 isoform X1"/>
    <property type="match status" value="1"/>
</dbReference>
<dbReference type="FunFam" id="2.60.120.200:FF:000003">
    <property type="entry name" value="neurexin-1 isoform X1"/>
    <property type="match status" value="1"/>
</dbReference>
<dbReference type="FunFam" id="2.60.120.200:FF:000004">
    <property type="entry name" value="neurexin-1 isoform X1"/>
    <property type="match status" value="1"/>
</dbReference>
<dbReference type="FunFam" id="2.60.120.200:FF:000005">
    <property type="entry name" value="neurexin-1 isoform X1"/>
    <property type="match status" value="1"/>
</dbReference>
<dbReference type="FunFam" id="2.60.120.200:FF:000007">
    <property type="entry name" value="neurexin-1 isoform X1"/>
    <property type="match status" value="1"/>
</dbReference>
<dbReference type="FunFam" id="2.60.120.200:FF:000014">
    <property type="entry name" value="neurexin-1 isoform X1"/>
    <property type="match status" value="1"/>
</dbReference>
<dbReference type="FunFam" id="2.10.25.10:FF:000137">
    <property type="entry name" value="neurexin-2-beta isoform X1"/>
    <property type="match status" value="1"/>
</dbReference>
<dbReference type="Gene3D" id="2.60.120.200">
    <property type="match status" value="6"/>
</dbReference>
<dbReference type="Gene3D" id="2.10.25.10">
    <property type="entry name" value="Laminin"/>
    <property type="match status" value="3"/>
</dbReference>
<dbReference type="InterPro" id="IPR013320">
    <property type="entry name" value="ConA-like_dom_sf"/>
</dbReference>
<dbReference type="InterPro" id="IPR000742">
    <property type="entry name" value="EGF-like_dom"/>
</dbReference>
<dbReference type="InterPro" id="IPR001791">
    <property type="entry name" value="Laminin_G"/>
</dbReference>
<dbReference type="InterPro" id="IPR003585">
    <property type="entry name" value="Neurexin-like"/>
</dbReference>
<dbReference type="InterPro" id="IPR050372">
    <property type="entry name" value="Neurexin-related_CASP"/>
</dbReference>
<dbReference type="PANTHER" id="PTHR15036:SF49">
    <property type="entry name" value="AXOTACTIN"/>
    <property type="match status" value="1"/>
</dbReference>
<dbReference type="PANTHER" id="PTHR15036">
    <property type="entry name" value="PIKACHURIN-LIKE PROTEIN"/>
    <property type="match status" value="1"/>
</dbReference>
<dbReference type="Pfam" id="PF02210">
    <property type="entry name" value="Laminin_G_2"/>
    <property type="match status" value="6"/>
</dbReference>
<dbReference type="SMART" id="SM00294">
    <property type="entry name" value="4.1m"/>
    <property type="match status" value="1"/>
</dbReference>
<dbReference type="SMART" id="SM00181">
    <property type="entry name" value="EGF"/>
    <property type="match status" value="3"/>
</dbReference>
<dbReference type="SMART" id="SM00282">
    <property type="entry name" value="LamG"/>
    <property type="match status" value="6"/>
</dbReference>
<dbReference type="SUPFAM" id="SSF49899">
    <property type="entry name" value="Concanavalin A-like lectins/glucanases"/>
    <property type="match status" value="6"/>
</dbReference>
<dbReference type="PROSITE" id="PS50026">
    <property type="entry name" value="EGF_3"/>
    <property type="match status" value="3"/>
</dbReference>
<dbReference type="PROSITE" id="PS50025">
    <property type="entry name" value="LAM_G_DOMAIN"/>
    <property type="match status" value="6"/>
</dbReference>
<sequence length="1710" mass="184885">MALGSRWQPPPQLPPLLLLLALAAGVRGLEFGGGPGQWARYARWAGAASTGELSFSLRTNATRALLLYLDDGGDCDFLELLLVDGRLRLRFTLSCAEPATLQLDTPVADDRWHMVLLTRDARRTALAVDGEARAAEVRSKRREMQVASDLFVGGIPPDVRLSALTLSTVKYEPPFRGLLANLKLGERPPALLGSQGLRGAAADPLCAPARNPCANGGLCTVLAPGEVGCDCSHTGFGGKFCSEEEHPMEGPAHLTLNSEVGSLLFSEGGAGRGGAGDVHQPTKGKEEFVATFKGNEFFCYDLSHNPIQSSTDEITLAFRTLQRNGLMLHTGKSADYVNLSLKSGAVWLVINLGSGAFEALVEPVNGKFNDNAWHDVRVTRNLRQHAGIGHAMVNKLHYLVTISVDGILTTTGYTQEDYTMLGSDDFFYIGGSPNTADLPGSPVSNNFMGCLKDVVYKNNDFKLELSRLAKEGDPKMKLQGDLSFRCEDVAALDPVTFESPEAFVALPRWSAKRTGSISLDFRTTEPNGLLLFSQGRRAGAGVGSHSSTQRADYFAMELLDGYLYLLLDMGSGGIKLRASSRKVNDGEWCHVDFQRDGRKGSISVNSRSTPFLATGESEVLDLESELYLGGLPEGGRVDLPLPPEVWTAALRAGYVGCVRDLFIDGRSRDLRGLAEAQGAVGVAPFCSRETLKQCASAPCRNGGICREGWNRFVCDCIGTGFLGRVCEREATVLSYDGSMYMKIMLPTAMHTEAEDVSLRFMSQRAYGLMMATTSRESADTLRLELDGGQMRLTVNLDCLRVGCAPSKGPETLFAGHKLNDNEWHTVRVVRRGKSLQLSVDNVTVEGQMAGAHTRLEFHNIETGIMTERRFISVVPSNFIGHLSGLVFNGQPYMDQCKDGDITYCELNARFGLRAIVADPVTFKSRSSYLALATLQAYASMHLFFQFKTTAPDGLLLFNSGNGNDFIVIELVKGYIHYVFDLGNGPSLMKGNSDKPVNDNQWHNVVVSRDPGNVHTLKIDSRTVTQHSNGARNLDLKGELYIGGLSKNMFSNLPKLVASRDGFQGCLASVDLNGRLPDLIADALHRIGQVERGCDGPSTTCTEESCANQGVCLQQWDGFTCDCTMTSYGGPVCNDPGTTYIFGKGGALITYTWPPNDRPSTRMDRLAVGFSTHQRSAVLVRVDSASGLGDYLQLHIDQGTVGVIFNVGTDDITIDEPNAIVSDGKYHVVRFTRSGGNATLQVDSWPVNERYPAGNFDNERLAIARQRIPYRLGRVVDEWLLDKGRQLTIFNSQAAIKIGGRDQGRPFQGQVSGLYYNGLKVLALAAESDPNVRTEGHLRLVGEGPSVLLSAETTATTLLADMATTIMETTTTMATTTTRRGRSPTMRDSTTQNTDDLLVASAECPSDDEDLEECEPSTGGELILPIITEDSLDPPPVATRSPFVPPPPTFYPFLTGVGATQDTLPPPAARRPSSGGPCQAERDDSDCEEPVEASGFASGEVFDSSLPPTDDEDFYTTFPLVTDRTTLLSPRKPRPNLRTDGATGAPGVLFAPSAPAPNLPAGKMNHRDPLQPLLENPPLGPGVPTAFEPRRPPPLRPGVTSAPGFPRLPTANPTGPGERGPPGAVEVIRESSSTTGMVVGIVAAAALCILILLYAMYKYRNRDEGSYQVDQSRNYISNSAQSNGAVVKEKAPAAPKTPSKAKKNKDKEYYV</sequence>